<dbReference type="PIR" id="JX0223">
    <property type="entry name" value="HPDG"/>
</dbReference>
<dbReference type="SMR" id="P19006"/>
<dbReference type="FunCoup" id="P19006">
    <property type="interactions" value="108"/>
</dbReference>
<dbReference type="STRING" id="9615.ENSCAFP00000029992"/>
<dbReference type="MEROPS" id="S01.972"/>
<dbReference type="GlyCosmos" id="P19006">
    <property type="glycosylation" value="3 sites, No reported glycans"/>
</dbReference>
<dbReference type="iPTMnet" id="P19006"/>
<dbReference type="SwissPalm" id="P19006"/>
<dbReference type="PaxDb" id="9612-ENSCAFP00000029992"/>
<dbReference type="eggNOG" id="KOG3627">
    <property type="taxonomic scope" value="Eukaryota"/>
</dbReference>
<dbReference type="InParanoid" id="P19006"/>
<dbReference type="Proteomes" id="UP000002254">
    <property type="component" value="Unplaced"/>
</dbReference>
<dbReference type="Proteomes" id="UP000694429">
    <property type="component" value="Unplaced"/>
</dbReference>
<dbReference type="Proteomes" id="UP000694542">
    <property type="component" value="Unplaced"/>
</dbReference>
<dbReference type="Proteomes" id="UP000805418">
    <property type="component" value="Unplaced"/>
</dbReference>
<dbReference type="GO" id="GO:0072562">
    <property type="term" value="C:blood microparticle"/>
    <property type="evidence" value="ECO:0000318"/>
    <property type="project" value="GO_Central"/>
</dbReference>
<dbReference type="GO" id="GO:0005615">
    <property type="term" value="C:extracellular space"/>
    <property type="evidence" value="ECO:0000318"/>
    <property type="project" value="GO_Central"/>
</dbReference>
<dbReference type="GO" id="GO:0016209">
    <property type="term" value="F:antioxidant activity"/>
    <property type="evidence" value="ECO:0007669"/>
    <property type="project" value="UniProtKB-KW"/>
</dbReference>
<dbReference type="GO" id="GO:0030492">
    <property type="term" value="F:hemoglobin binding"/>
    <property type="evidence" value="ECO:0007669"/>
    <property type="project" value="UniProtKB-KW"/>
</dbReference>
<dbReference type="GO" id="GO:0004252">
    <property type="term" value="F:serine-type endopeptidase activity"/>
    <property type="evidence" value="ECO:0000318"/>
    <property type="project" value="GO_Central"/>
</dbReference>
<dbReference type="GO" id="GO:0006953">
    <property type="term" value="P:acute-phase response"/>
    <property type="evidence" value="ECO:0007669"/>
    <property type="project" value="UniProtKB-KW"/>
</dbReference>
<dbReference type="GO" id="GO:0042742">
    <property type="term" value="P:defense response to bacterium"/>
    <property type="evidence" value="ECO:0007669"/>
    <property type="project" value="UniProtKB-KW"/>
</dbReference>
<dbReference type="GO" id="GO:0002376">
    <property type="term" value="P:immune system process"/>
    <property type="evidence" value="ECO:0007669"/>
    <property type="project" value="UniProtKB-KW"/>
</dbReference>
<dbReference type="GO" id="GO:0031638">
    <property type="term" value="P:zymogen activation"/>
    <property type="evidence" value="ECO:0000318"/>
    <property type="project" value="GO_Central"/>
</dbReference>
<dbReference type="CDD" id="cd00033">
    <property type="entry name" value="CCP"/>
    <property type="match status" value="1"/>
</dbReference>
<dbReference type="CDD" id="cd00190">
    <property type="entry name" value="Tryp_SPc"/>
    <property type="match status" value="1"/>
</dbReference>
<dbReference type="FunFam" id="2.10.70.10:FF:000048">
    <property type="entry name" value="Haptoglobin"/>
    <property type="match status" value="1"/>
</dbReference>
<dbReference type="FunFam" id="2.40.10.10:FF:000027">
    <property type="entry name" value="Haptoglobin"/>
    <property type="match status" value="1"/>
</dbReference>
<dbReference type="FunFam" id="2.40.10.10:FF:000031">
    <property type="entry name" value="Haptoglobin"/>
    <property type="match status" value="1"/>
</dbReference>
<dbReference type="Gene3D" id="2.10.70.10">
    <property type="entry name" value="Complement Module, domain 1"/>
    <property type="match status" value="1"/>
</dbReference>
<dbReference type="Gene3D" id="2.40.10.10">
    <property type="entry name" value="Trypsin-like serine proteases"/>
    <property type="match status" value="2"/>
</dbReference>
<dbReference type="InterPro" id="IPR008292">
    <property type="entry name" value="Haptoglobin"/>
</dbReference>
<dbReference type="InterPro" id="IPR009003">
    <property type="entry name" value="Peptidase_S1_PA"/>
</dbReference>
<dbReference type="InterPro" id="IPR043504">
    <property type="entry name" value="Peptidase_S1_PA_chymotrypsin"/>
</dbReference>
<dbReference type="InterPro" id="IPR001314">
    <property type="entry name" value="Peptidase_S1A"/>
</dbReference>
<dbReference type="InterPro" id="IPR035976">
    <property type="entry name" value="Sushi/SCR/CCP_sf"/>
</dbReference>
<dbReference type="InterPro" id="IPR000436">
    <property type="entry name" value="Sushi_SCR_CCP_dom"/>
</dbReference>
<dbReference type="InterPro" id="IPR001254">
    <property type="entry name" value="Trypsin_dom"/>
</dbReference>
<dbReference type="PANTHER" id="PTHR24255">
    <property type="entry name" value="COMPLEMENT COMPONENT 1, S SUBCOMPONENT-RELATED"/>
    <property type="match status" value="1"/>
</dbReference>
<dbReference type="PANTHER" id="PTHR24255:SF27">
    <property type="entry name" value="HAPTOGLOBIN-RELATED PROTEIN"/>
    <property type="match status" value="1"/>
</dbReference>
<dbReference type="Pfam" id="PF00089">
    <property type="entry name" value="Trypsin"/>
    <property type="match status" value="1"/>
</dbReference>
<dbReference type="PIRSF" id="PIRSF001137">
    <property type="entry name" value="Haptoglobin"/>
    <property type="match status" value="1"/>
</dbReference>
<dbReference type="PRINTS" id="PR00722">
    <property type="entry name" value="CHYMOTRYPSIN"/>
</dbReference>
<dbReference type="SMART" id="SM00020">
    <property type="entry name" value="Tryp_SPc"/>
    <property type="match status" value="1"/>
</dbReference>
<dbReference type="SUPFAM" id="SSF57535">
    <property type="entry name" value="Complement control module/SCR domain"/>
    <property type="match status" value="1"/>
</dbReference>
<dbReference type="SUPFAM" id="SSF50494">
    <property type="entry name" value="Trypsin-like serine proteases"/>
    <property type="match status" value="1"/>
</dbReference>
<dbReference type="PROSITE" id="PS50923">
    <property type="entry name" value="SUSHI"/>
    <property type="match status" value="1"/>
</dbReference>
<dbReference type="PROSITE" id="PS50240">
    <property type="entry name" value="TRYPSIN_DOM"/>
    <property type="match status" value="1"/>
</dbReference>
<keyword id="KW-0011">Acute phase</keyword>
<keyword id="KW-0044">Antibiotic</keyword>
<keyword id="KW-0929">Antimicrobial</keyword>
<keyword id="KW-0049">Antioxidant</keyword>
<keyword id="KW-0903">Direct protein sequencing</keyword>
<keyword id="KW-1015">Disulfide bond</keyword>
<keyword id="KW-0325">Glycoprotein</keyword>
<keyword id="KW-0351">Hemoglobin-binding</keyword>
<keyword id="KW-0391">Immunity</keyword>
<keyword id="KW-1185">Reference proteome</keyword>
<keyword id="KW-0964">Secreted</keyword>
<keyword id="KW-0721">Serine protease homolog</keyword>
<keyword id="KW-0768">Sushi</keyword>
<organism>
    <name type="scientific">Canis lupus familiaris</name>
    <name type="common">Dog</name>
    <name type="synonym">Canis familiaris</name>
    <dbReference type="NCBI Taxonomy" id="9615"/>
    <lineage>
        <taxon>Eukaryota</taxon>
        <taxon>Metazoa</taxon>
        <taxon>Chordata</taxon>
        <taxon>Craniata</taxon>
        <taxon>Vertebrata</taxon>
        <taxon>Euteleostomi</taxon>
        <taxon>Mammalia</taxon>
        <taxon>Eutheria</taxon>
        <taxon>Laurasiatheria</taxon>
        <taxon>Carnivora</taxon>
        <taxon>Caniformia</taxon>
        <taxon>Canidae</taxon>
        <taxon>Canis</taxon>
    </lineage>
</organism>
<sequence>EDTGSEATNNTEVSLPKPPVIENGYVEHMIRYQCKPFYKLHTEGDGVYTLNSEKHWTNKAVGEKLPECEAVCGKPKNPVDQVQRIMGGSVDAKGSFPWQAKMVSHHNLTSGATLINEQWLLTTAKNLFLGHKDDAKANDIAPTLKLYVGKNQLVEVEKVVLHPDYSKVDIGLIKLKQKVPIDERVMPICLPSKDYAEVGRIGYVSGWGRNSNFNFTELLKYVMLPVADQDKCVQHYEGSTVPEKKSPKSPVGVQPILNEHTFCAGMSKFQEDTCYGDAGSAFAVHDQDEDTWYAAGILSFDKSCTVAEYGVYVKVPSVLAWVQETIAGN</sequence>
<evidence type="ECO:0000250" key="1"/>
<evidence type="ECO:0000250" key="2">
    <source>
        <dbReference type="UniProtKB" id="P00738"/>
    </source>
</evidence>
<evidence type="ECO:0000250" key="3">
    <source>
        <dbReference type="UniProtKB" id="Q8SPS7"/>
    </source>
</evidence>
<evidence type="ECO:0000255" key="4">
    <source>
        <dbReference type="PROSITE-ProRule" id="PRU00274"/>
    </source>
</evidence>
<evidence type="ECO:0000255" key="5">
    <source>
        <dbReference type="PROSITE-ProRule" id="PRU00302"/>
    </source>
</evidence>
<evidence type="ECO:0000269" key="6">
    <source>
    </source>
</evidence>
<evidence type="ECO:0000269" key="7">
    <source>
    </source>
</evidence>
<evidence type="ECO:0000269" key="8">
    <source>
    </source>
</evidence>
<evidence type="ECO:0000305" key="9"/>
<comment type="function">
    <text evidence="1">As a result of hemolysis, hemoglobin is found to accumulate in the kidney and is secreted in the urine. Haptoglobin captures, and combines with free plasma hemoglobin to allow hepatic recycling of heme iron and to prevent kidney damage. Haptoglobin also acts as an antioxidant, has antibacterial activity and plays a role in modulating many aspects of the acute phase response. Hemoglobin/haptoglobin complexes are rapidly cleared by the macrophage CD163 scavenger receptor expressed on the surface of liver Kupfer cells through an endocytic lysosomal degradation pathway (By similarity).</text>
</comment>
<comment type="subunit">
    <text evidence="2 3">Tetramer of two alpha and two beta chains; disulfide-linked (By similarity). The hemoglobin/haptoglobin complex is composed of a haptoglobin dimer bound to two hemoglobin alpha-beta dimers (By similarity). Interacts with CD163 (By similarity). Interacts with ERGIC3 (By similarity).</text>
</comment>
<comment type="subcellular location">
    <subcellularLocation>
        <location>Secreted</location>
        <location>Extracellular space</location>
    </subcellularLocation>
</comment>
<comment type="tissue specificity">
    <text>Expressed by the liver and secreted in plasma.</text>
</comment>
<comment type="domain">
    <text evidence="1">The beta chain mediates most of the interactions with both subunits of hemoglobin, while the alpha chain forms the homodimeric interface.</text>
</comment>
<comment type="similarity">
    <text evidence="4">Belongs to the peptidase S1 family.</text>
</comment>
<comment type="caution">
    <text evidence="9">Although homologous to serine proteases, it has lost all essential catalytic residues and has no enzymatic activity.</text>
</comment>
<protein>
    <recommendedName>
        <fullName>Haptoglobin</fullName>
    </recommendedName>
    <component>
        <recommendedName>
            <fullName>Haptoglobin alpha chain</fullName>
        </recommendedName>
    </component>
    <component>
        <recommendedName>
            <fullName>Haptoglobin beta chain</fullName>
        </recommendedName>
    </component>
</protein>
<name>HPT_CANLF</name>
<proteinExistence type="evidence at protein level"/>
<reference key="1">
    <citation type="journal article" date="1992" name="J. Biochem.">
        <title>Amino acid sequence and disulfide-bridge location of canine haptoglobin.</title>
        <authorList>
            <person name="Kumazaki T."/>
            <person name="Urushibara N."/>
            <person name="Ishii S."/>
        </authorList>
    </citation>
    <scope>PROTEIN SEQUENCE</scope>
    <scope>GLYCOSYLATION AT ASN-9; ASN-107 AND ASN-214</scope>
</reference>
<reference key="2">
    <citation type="journal article" date="1976" name="Comp. Biochem. Physiol.">
        <title>Comparative sequence analysis of the N-terminal region of rat, rabbit, and dog haptoglobin beta-chains.</title>
        <authorList>
            <person name="Kurosky A."/>
            <person name="Kim H.H."/>
            <person name="Touchstone B."/>
        </authorList>
    </citation>
    <scope>PROTEIN SEQUENCE OF 85-124</scope>
</reference>
<reference key="3">
    <citation type="journal article" date="1993" name="J. Vet. Med. Sci.">
        <title>Purification and identification of a serum protein increased by anthelmintic drugs for Dirofilaria immitis in dogs.</title>
        <authorList>
            <person name="Tosa N."/>
            <person name="Morimatsu M."/>
            <person name="Nakagawa M."/>
            <person name="Miyoshi F."/>
            <person name="Uchida E."/>
            <person name="Niiyama M."/>
            <person name="Syuto B."/>
            <person name="Saito M."/>
        </authorList>
    </citation>
    <scope>PROTEIN SEQUENCE OF 1-20 AND 85-104</scope>
</reference>
<gene>
    <name type="primary">HP</name>
</gene>
<feature type="chain" id="PRO_0000028452" description="Haptoglobin">
    <location>
        <begin position="1"/>
        <end position="329"/>
    </location>
</feature>
<feature type="chain" id="PRO_0000028453" description="Haptoglobin alpha chain">
    <location>
        <begin position="1"/>
        <end position="83"/>
    </location>
</feature>
<feature type="propeptide" id="PRO_0000028454" evidence="7 8">
    <location>
        <position position="84"/>
    </location>
</feature>
<feature type="chain" id="PRO_0000028455" description="Haptoglobin beta chain">
    <location>
        <begin position="85"/>
        <end position="329"/>
    </location>
</feature>
<feature type="domain" description="Sushi" evidence="5">
    <location>
        <begin position="13"/>
        <end position="70"/>
    </location>
</feature>
<feature type="domain" description="Peptidase S1" evidence="4">
    <location>
        <begin position="85"/>
        <end position="327"/>
    </location>
</feature>
<feature type="region of interest" description="Interaction with CD163" evidence="1">
    <location>
        <begin position="241"/>
        <end position="246"/>
    </location>
</feature>
<feature type="glycosylation site" description="N-linked (GlcNAc...) asparagine" evidence="6">
    <location>
        <position position="9"/>
    </location>
</feature>
<feature type="glycosylation site" description="N-linked (GlcNAc...) asparagine" evidence="6">
    <location>
        <position position="107"/>
    </location>
</feature>
<feature type="glycosylation site" description="N-linked (GlcNAc...) asparagine" evidence="6">
    <location>
        <position position="214"/>
    </location>
</feature>
<feature type="disulfide bond" evidence="6">
    <location>
        <begin position="34"/>
        <end position="68"/>
    </location>
</feature>
<feature type="disulfide bond" description="Interchain (between alpha and beta chains)">
    <location>
        <begin position="72"/>
        <end position="189"/>
    </location>
</feature>
<feature type="disulfide bond" evidence="6">
    <location>
        <begin position="232"/>
        <end position="263"/>
    </location>
</feature>
<feature type="disulfide bond" evidence="6">
    <location>
        <begin position="274"/>
        <end position="304"/>
    </location>
</feature>
<accession>P19006</accession>
<accession>Q9TRH6</accession>
<accession>Q9TRH7</accession>